<dbReference type="PIR" id="A58963">
    <property type="entry name" value="A58963"/>
</dbReference>
<dbReference type="PDB" id="1B45">
    <property type="method" value="NMR"/>
    <property type="chains" value="A=49-62"/>
</dbReference>
<dbReference type="PDBsum" id="1B45"/>
<dbReference type="SMR" id="P56973"/>
<dbReference type="ConoServer" id="1558">
    <property type="toxin name" value="CnIA"/>
</dbReference>
<dbReference type="ConoServer" id="594">
    <property type="toxin name" value="CnIB"/>
</dbReference>
<dbReference type="EvolutionaryTrace" id="P56973"/>
<dbReference type="GO" id="GO:0005576">
    <property type="term" value="C:extracellular region"/>
    <property type="evidence" value="ECO:0007669"/>
    <property type="project" value="UniProtKB-SubCell"/>
</dbReference>
<dbReference type="GO" id="GO:0035792">
    <property type="term" value="C:host cell postsynaptic membrane"/>
    <property type="evidence" value="ECO:0007669"/>
    <property type="project" value="UniProtKB-KW"/>
</dbReference>
<dbReference type="GO" id="GO:0030550">
    <property type="term" value="F:acetylcholine receptor inhibitor activity"/>
    <property type="evidence" value="ECO:0007669"/>
    <property type="project" value="UniProtKB-KW"/>
</dbReference>
<dbReference type="GO" id="GO:0099106">
    <property type="term" value="F:ion channel regulator activity"/>
    <property type="evidence" value="ECO:0007669"/>
    <property type="project" value="UniProtKB-KW"/>
</dbReference>
<dbReference type="GO" id="GO:0090729">
    <property type="term" value="F:toxin activity"/>
    <property type="evidence" value="ECO:0007669"/>
    <property type="project" value="UniProtKB-KW"/>
</dbReference>
<dbReference type="InterPro" id="IPR009958">
    <property type="entry name" value="Conotoxin_a-typ"/>
</dbReference>
<dbReference type="InterPro" id="IPR018072">
    <property type="entry name" value="Conotoxin_a-typ_CS"/>
</dbReference>
<dbReference type="Pfam" id="PF07365">
    <property type="entry name" value="Toxin_8"/>
    <property type="match status" value="1"/>
</dbReference>
<dbReference type="PROSITE" id="PS60014">
    <property type="entry name" value="ALPHA_CONOTOXIN"/>
    <property type="match status" value="1"/>
</dbReference>
<protein>
    <recommendedName>
        <fullName>Alpha-conotoxin CnIA</fullName>
    </recommendedName>
    <component>
        <recommendedName>
            <fullName>Alpha-conotoxin CnIB</fullName>
        </recommendedName>
    </component>
    <component>
        <recommendedName>
            <fullName>Alpha-conotoxin CnIK</fullName>
        </recommendedName>
        <alternativeName>
            <fullName>[Hyp7]-CnIK</fullName>
        </alternativeName>
    </component>
</protein>
<comment type="function">
    <text evidence="2 4">Alpha-conotoxins act on postsynaptic membranes, they bind to the nicotinic acetylcholine receptors (nAChR) and thus inhibit them (PubMed:10320362, PubMed:28238803). CnIA and CnIB block muscular nAChR alpha-1/gamma and alpha-1/delta subunits (PubMed:10320362).</text>
</comment>
<comment type="subcellular location">
    <subcellularLocation>
        <location evidence="2 3 4">Secreted</location>
    </subcellularLocation>
</comment>
<comment type="tissue specificity">
    <text evidence="3">Expressed by the venom duct.</text>
</comment>
<comment type="domain">
    <text>The cysteine framework is I (CC-C-C). Alpha3/5 pattern.</text>
</comment>
<comment type="mass spectrometry">
    <molecule>Alpha-conotoxin CnIA</molecule>
    <text>CnIA.</text>
</comment>
<comment type="mass spectrometry">
    <molecule>Alpha-conotoxin CnIB</molecule>
    <text>CnIB.</text>
</comment>
<comment type="mass spectrometry">
    <molecule>Alpha-conotoxin CnIK</molecule>
    <text>CnIK.</text>
</comment>
<comment type="mass spectrometry">
    <molecule>Alpha-conotoxin CnIK</molecule>
    <text>[Hyp]CnIK.</text>
</comment>
<comment type="miscellaneous">
    <text evidence="6">Found in injectable (milked) (IV) venom.</text>
</comment>
<comment type="similarity">
    <text evidence="5">Belongs to the conotoxin A superfamily.</text>
</comment>
<name>CA1A_CONCN</name>
<organism>
    <name type="scientific">Conus consors</name>
    <name type="common">Singed cone</name>
    <dbReference type="NCBI Taxonomy" id="101297"/>
    <lineage>
        <taxon>Eukaryota</taxon>
        <taxon>Metazoa</taxon>
        <taxon>Spiralia</taxon>
        <taxon>Lophotrochozoa</taxon>
        <taxon>Mollusca</taxon>
        <taxon>Gastropoda</taxon>
        <taxon>Caenogastropoda</taxon>
        <taxon>Neogastropoda</taxon>
        <taxon>Conoidea</taxon>
        <taxon>Conidae</taxon>
        <taxon>Conus</taxon>
        <taxon>Pionoconus</taxon>
    </lineage>
</organism>
<keyword id="KW-0002">3D-structure</keyword>
<keyword id="KW-0008">Acetylcholine receptor inhibiting toxin</keyword>
<keyword id="KW-0027">Amidation</keyword>
<keyword id="KW-0903">Direct protein sequencing</keyword>
<keyword id="KW-1015">Disulfide bond</keyword>
<keyword id="KW-0379">Hydroxylation</keyword>
<keyword id="KW-0872">Ion channel impairing toxin</keyword>
<keyword id="KW-0528">Neurotoxin</keyword>
<keyword id="KW-0629">Postsynaptic neurotoxin</keyword>
<keyword id="KW-0964">Secreted</keyword>
<keyword id="KW-0732">Signal</keyword>
<keyword id="KW-0800">Toxin</keyword>
<proteinExistence type="evidence at protein level"/>
<feature type="signal peptide" evidence="1">
    <location>
        <begin position="1"/>
        <end position="21"/>
    </location>
</feature>
<feature type="propeptide" id="PRO_0000419824" evidence="2">
    <location>
        <begin position="22"/>
        <end position="47"/>
    </location>
</feature>
<feature type="peptide" id="PRO_0000419825" description="Alpha-conotoxin CnIK">
    <location>
        <begin position="48"/>
        <end position="62"/>
    </location>
</feature>
<feature type="peptide" id="PRO_0000034871" description="Alpha-conotoxin CnIA">
    <location>
        <begin position="49"/>
        <end position="62"/>
    </location>
</feature>
<feature type="peptide" id="PRO_0000034872" description="Alpha-conotoxin CnIB">
    <location>
        <begin position="51"/>
        <end position="62"/>
    </location>
</feature>
<feature type="modified residue" description="4-hydroxyproline; in CnIK; partial" evidence="3">
    <location>
        <position position="54"/>
    </location>
</feature>
<feature type="modified residue" description="Cysteine amide" evidence="2 3">
    <location>
        <position position="62"/>
    </location>
</feature>
<feature type="disulfide bond" evidence="2">
    <location>
        <begin position="51"/>
        <end position="56"/>
    </location>
</feature>
<feature type="disulfide bond" evidence="2">
    <location>
        <begin position="52"/>
        <end position="62"/>
    </location>
</feature>
<feature type="helix" evidence="7">
    <location>
        <begin position="54"/>
        <end position="56"/>
    </location>
</feature>
<sequence>MGMRMMFTVFLLVVLTTTVVSFPSDSASDGRDDEAKDERSDIYESKRNGRCCHPACGKYYSCGR</sequence>
<accession>P56973</accession>
<reference key="1">
    <citation type="journal article" date="2012" name="J. Proteomics">
        <title>Large-scale discovery of conopeptides and conoproteins in the injectable venom of a fish-hunting cone snail using a combined proteomic and transcriptomic approach.</title>
        <authorList>
            <person name="Violette A."/>
            <person name="Biass D."/>
            <person name="Dutertre S."/>
            <person name="Koua D."/>
            <person name="Piquemal D."/>
            <person name="Pierrat F."/>
            <person name="Stocklin R."/>
            <person name="Favreau P."/>
        </authorList>
    </citation>
    <scope>NUCLEOTIDE SEQUENCE [MRNA]</scope>
    <scope>TISSUE SPECIFICITY</scope>
    <scope>DOMAIN</scope>
    <scope>HYDROXYLATION AT PRO-54</scope>
    <scope>AMIDATION AT CYS-62</scope>
    <scope>MASS SPECTROMETRY</scope>
    <scope>IDENTIFICATION BY MASS SPECTROMETRY</scope>
    <source>
        <tissue>Venom</tissue>
        <tissue>Venom duct</tissue>
    </source>
</reference>
<reference key="2">
    <citation type="journal article" date="1999" name="Biochemistry">
        <title>Biochemical characterization and nuclear magnetic resonance structure of novel alpha-conotoxins isolated from the venom of Conus consors.</title>
        <authorList>
            <person name="Favreau P."/>
            <person name="Krimm I."/>
            <person name="le Gall F."/>
            <person name="Bobenrieth M.J."/>
            <person name="Lamthanh H."/>
            <person name="Bouet F."/>
            <person name="Servent D."/>
            <person name="Molgo J."/>
            <person name="Menez A."/>
            <person name="Letourneux Y."/>
            <person name="Lancelin J.-M."/>
        </authorList>
    </citation>
    <scope>PROTEIN SEQUENCE OF 48-62</scope>
    <scope>SYNTHESIS</scope>
    <scope>CHARACTERIZATION</scope>
    <scope>STRUCTURE BY NMR</scope>
    <scope>FUNCTION</scope>
    <scope>SUBCELLULAR LOCATION</scope>
    <scope>AMIDATION AT CYS-62</scope>
    <scope>DISULFIDE BONDS</scope>
    <source>
        <tissue>Venom</tissue>
    </source>
</reference>
<reference key="3">
    <citation type="journal article" date="2017" name="Toxicon">
        <title>Discovery and characterization of EIIB, a new alpha-conotoxin from Conus ermineus venom by nAChRs affinity capture monitored by MALDI-TOF/TOF mass spectrometry.</title>
        <authorList>
            <person name="Echterbille J."/>
            <person name="Gilles N."/>
            <person name="Araoz R."/>
            <person name="Mourier G."/>
            <person name="Amar M."/>
            <person name="Servent D."/>
            <person name="De Pauw E."/>
            <person name="Quinton L."/>
        </authorList>
    </citation>
    <scope>FUNCTION</scope>
    <scope>SUBCELLULAR LOCATION</scope>
</reference>
<evidence type="ECO:0000255" key="1"/>
<evidence type="ECO:0000269" key="2">
    <source>
    </source>
</evidence>
<evidence type="ECO:0000269" key="3">
    <source>
    </source>
</evidence>
<evidence type="ECO:0000269" key="4">
    <source>
    </source>
</evidence>
<evidence type="ECO:0000305" key="5"/>
<evidence type="ECO:0000305" key="6">
    <source>
    </source>
</evidence>
<evidence type="ECO:0007829" key="7">
    <source>
        <dbReference type="PDB" id="1B45"/>
    </source>
</evidence>